<feature type="signal peptide" evidence="3">
    <location>
        <begin position="1"/>
        <end position="22"/>
    </location>
</feature>
<feature type="chain" id="PRO_0000441953" description="Short chain dehydrogenase helC">
    <location>
        <begin position="23"/>
        <end position="257"/>
    </location>
</feature>
<feature type="active site" description="Proton acceptor" evidence="5">
    <location>
        <position position="154"/>
    </location>
</feature>
<feature type="active site" description="Lowers pKa of active site Tyr" evidence="2">
    <location>
        <position position="158"/>
    </location>
</feature>
<feature type="binding site" evidence="1">
    <location>
        <position position="13"/>
    </location>
    <ligand>
        <name>NADP(+)</name>
        <dbReference type="ChEBI" id="CHEBI:58349"/>
    </ligand>
</feature>
<feature type="binding site" evidence="1">
    <location>
        <position position="60"/>
    </location>
    <ligand>
        <name>NADP(+)</name>
        <dbReference type="ChEBI" id="CHEBI:58349"/>
    </ligand>
</feature>
<feature type="binding site" evidence="2">
    <location>
        <position position="87"/>
    </location>
    <ligand>
        <name>NADP(+)</name>
        <dbReference type="ChEBI" id="CHEBI:58349"/>
    </ligand>
</feature>
<feature type="binding site" evidence="2">
    <location>
        <position position="154"/>
    </location>
    <ligand>
        <name>NADP(+)</name>
        <dbReference type="ChEBI" id="CHEBI:58349"/>
    </ligand>
</feature>
<feature type="binding site" evidence="2">
    <location>
        <position position="158"/>
    </location>
    <ligand>
        <name>NADP(+)</name>
        <dbReference type="ChEBI" id="CHEBI:58349"/>
    </ligand>
</feature>
<feature type="binding site" evidence="2">
    <location>
        <position position="185"/>
    </location>
    <ligand>
        <name>NADP(+)</name>
        <dbReference type="ChEBI" id="CHEBI:58349"/>
    </ligand>
</feature>
<feature type="binding site" evidence="1">
    <location>
        <position position="187"/>
    </location>
    <ligand>
        <name>NADP(+)</name>
        <dbReference type="ChEBI" id="CHEBI:58349"/>
    </ligand>
</feature>
<feature type="glycosylation site" description="N-linked (GlcNAc...) asparagine" evidence="4">
    <location>
        <position position="46"/>
    </location>
</feature>
<feature type="glycosylation site" description="N-linked (GlcNAc...) asparagine" evidence="4">
    <location>
        <position position="110"/>
    </location>
</feature>
<name>HELC_ASPFU</name>
<keyword id="KW-0325">Glycoprotein</keyword>
<keyword id="KW-0521">NADP</keyword>
<keyword id="KW-0560">Oxidoreductase</keyword>
<keyword id="KW-1185">Reference proteome</keyword>
<keyword id="KW-0732">Signal</keyword>
<reference key="1">
    <citation type="journal article" date="2005" name="Nature">
        <title>Genomic sequence of the pathogenic and allergenic filamentous fungus Aspergillus fumigatus.</title>
        <authorList>
            <person name="Nierman W.C."/>
            <person name="Pain A."/>
            <person name="Anderson M.J."/>
            <person name="Wortman J.R."/>
            <person name="Kim H.S."/>
            <person name="Arroyo J."/>
            <person name="Berriman M."/>
            <person name="Abe K."/>
            <person name="Archer D.B."/>
            <person name="Bermejo C."/>
            <person name="Bennett J.W."/>
            <person name="Bowyer P."/>
            <person name="Chen D."/>
            <person name="Collins M."/>
            <person name="Coulsen R."/>
            <person name="Davies R."/>
            <person name="Dyer P.S."/>
            <person name="Farman M.L."/>
            <person name="Fedorova N."/>
            <person name="Fedorova N.D."/>
            <person name="Feldblyum T.V."/>
            <person name="Fischer R."/>
            <person name="Fosker N."/>
            <person name="Fraser A."/>
            <person name="Garcia J.L."/>
            <person name="Garcia M.J."/>
            <person name="Goble A."/>
            <person name="Goldman G.H."/>
            <person name="Gomi K."/>
            <person name="Griffith-Jones S."/>
            <person name="Gwilliam R."/>
            <person name="Haas B.J."/>
            <person name="Haas H."/>
            <person name="Harris D.E."/>
            <person name="Horiuchi H."/>
            <person name="Huang J."/>
            <person name="Humphray S."/>
            <person name="Jimenez J."/>
            <person name="Keller N."/>
            <person name="Khouri H."/>
            <person name="Kitamoto K."/>
            <person name="Kobayashi T."/>
            <person name="Konzack S."/>
            <person name="Kulkarni R."/>
            <person name="Kumagai T."/>
            <person name="Lafton A."/>
            <person name="Latge J.-P."/>
            <person name="Li W."/>
            <person name="Lord A."/>
            <person name="Lu C."/>
            <person name="Majoros W.H."/>
            <person name="May G.S."/>
            <person name="Miller B.L."/>
            <person name="Mohamoud Y."/>
            <person name="Molina M."/>
            <person name="Monod M."/>
            <person name="Mouyna I."/>
            <person name="Mulligan S."/>
            <person name="Murphy L.D."/>
            <person name="O'Neil S."/>
            <person name="Paulsen I."/>
            <person name="Penalva M.A."/>
            <person name="Pertea M."/>
            <person name="Price C."/>
            <person name="Pritchard B.L."/>
            <person name="Quail M.A."/>
            <person name="Rabbinowitsch E."/>
            <person name="Rawlins N."/>
            <person name="Rajandream M.A."/>
            <person name="Reichard U."/>
            <person name="Renauld H."/>
            <person name="Robson G.D."/>
            <person name="Rodriguez de Cordoba S."/>
            <person name="Rodriguez-Pena J.M."/>
            <person name="Ronning C.M."/>
            <person name="Rutter S."/>
            <person name="Salzberg S.L."/>
            <person name="Sanchez M."/>
            <person name="Sanchez-Ferrero J.C."/>
            <person name="Saunders D."/>
            <person name="Seeger K."/>
            <person name="Squares R."/>
            <person name="Squares S."/>
            <person name="Takeuchi M."/>
            <person name="Tekaia F."/>
            <person name="Turner G."/>
            <person name="Vazquez de Aldana C.R."/>
            <person name="Weidman J."/>
            <person name="White O."/>
            <person name="Woodward J.R."/>
            <person name="Yu J.-H."/>
            <person name="Fraser C.M."/>
            <person name="Galagan J.E."/>
            <person name="Asai K."/>
            <person name="Machida M."/>
            <person name="Hall N."/>
            <person name="Barrell B.G."/>
            <person name="Denning D.W."/>
        </authorList>
    </citation>
    <scope>NUCLEOTIDE SEQUENCE [LARGE SCALE GENOMIC DNA]</scope>
    <source>
        <strain>ATCC MYA-4609 / CBS 101355 / FGSC A1100 / Af293</strain>
    </source>
</reference>
<reference key="2">
    <citation type="journal article" date="2007" name="PLoS Pathog.">
        <title>Transcriptional regulation of chemical diversity in Aspergillus fumigatus by LaeA.</title>
        <authorList>
            <person name="Perrin R.M."/>
            <person name="Fedorova N.D."/>
            <person name="Bok J.W."/>
            <person name="Cramer R.A."/>
            <person name="Wortman J.R."/>
            <person name="Kim H.S."/>
            <person name="Nierman W.C."/>
            <person name="Keller N.P."/>
        </authorList>
    </citation>
    <scope>INDUCTION</scope>
</reference>
<reference key="3">
    <citation type="journal article" date="2009" name="J. Am. Chem. Soc.">
        <title>Biosynthesis of steroidal antibiotic fusidanes: functional analysis of oxidosqualene cyclase and subsequent tailoring enzymes from Aspergillus fumigatus.</title>
        <authorList>
            <person name="Mitsuguchi H."/>
            <person name="Seshime Y."/>
            <person name="Fujii I."/>
            <person name="Shibuya M."/>
            <person name="Ebizuka Y."/>
            <person name="Kushiro T."/>
        </authorList>
    </citation>
    <scope>FUNCTION</scope>
    <scope>CATALYTIC ACTIVITY</scope>
    <scope>PATHWAY</scope>
</reference>
<reference key="4">
    <citation type="journal article" date="2009" name="Org. Lett.">
        <title>Protostadienol biosynthesis and metabolism in the pathogenic fungus Aspergillus fumigatus.</title>
        <authorList>
            <person name="Lodeiro S."/>
            <person name="Xiong Q."/>
            <person name="Wilson W.K."/>
            <person name="Ivanova Y."/>
            <person name="Smith M.L."/>
            <person name="May G.S."/>
            <person name="Matsuda S.P."/>
        </authorList>
    </citation>
    <scope>FUNCTION</scope>
</reference>
<reference key="5">
    <citation type="journal article" date="2014" name="BMC Genomics">
        <title>RNA-seq reveals the pan-transcriptomic impact of attenuating the gliotoxin self-protection mechanism in Aspergillus fumigatus.</title>
        <authorList>
            <person name="O'Keeffe G."/>
            <person name="Hammel S."/>
            <person name="Owens R.A."/>
            <person name="Keane T.M."/>
            <person name="Fitzpatrick D.A."/>
            <person name="Jones G.W."/>
            <person name="Doyle S."/>
        </authorList>
    </citation>
    <scope>INDUCTION</scope>
</reference>
<reference key="6">
    <citation type="journal article" date="2017" name="Nat. Commun.">
        <title>Biosynthesis of helvolic acid and identification of an unusual C-4-demethylation process distinct from sterol biosynthesis.</title>
        <authorList>
            <person name="Lv J.M."/>
            <person name="Hu D."/>
            <person name="Gao H."/>
            <person name="Kushiro T."/>
            <person name="Awakawa T."/>
            <person name="Chen G.D."/>
            <person name="Wang C.X."/>
            <person name="Abe I."/>
            <person name="Yao X.S."/>
        </authorList>
    </citation>
    <scope>FUNCTION</scope>
    <scope>CATALYTIC ACTIVITY</scope>
    <scope>PATHWAY</scope>
</reference>
<comment type="function">
    <text evidence="7 8 10">Short chain dehydrogenase; part of the gene cluster that mediates the biosynthesis of helvolic acid, an antibacterial nortriterpenoid (PubMed:19216560, PubMed:19415934, PubMed:29158519). Protostadienol synthase helA cyclizes (3S)-oxidosqualene to (17Z)-protosta-17(20),24-dien-3-beta-ol (protostadienol) (PubMed:19216560, PubMed:19415934, PubMed:29158519). The synthesis of protostadienol is followed by several steps of monooxygenation, dehydrogenation, and acyl transfer to yield the final helvolic acid (PubMed:19216560). Following the cyclization to the tetracyclic protostadienol by helA, cytochrome P450 monooxygenases helB1-mediated and helB2-mediated oxidation at C-4 and C-16, acyltransferase helD2-dependent acetylation of 16-OH, oxidation of C-21 by cytochrome P450 monooxygenase helB4, and short chain dehydrogenase helC-dependent oxidative decarboxylation yield the fusidane skeleton (PubMed:29158519). This intermediate is further modified in three additional steps mediated by the cytochrome P450 monooxygenase helB3, the acyltransferase helD1, and the 3-ketosteroid 1-dehydrogenase helE to give helvolic acid (PubMed:19216560, PubMed:19415934, PubMed:29158519). Compared with the late stages in the biosynthesis of helvolic acid, enzymes involved in the early stage modifications act in a relatively strict order (PubMed:29158519). The hydroxylation of C-16 by helB1 and subsequent acetylation by helD2 should occur before the helB3-mediated oxidation of C-21 (PubMed:29158519). C-4 demethylation in fusidane-type antibiotics proceeds in an unusual manner though it is also achieved by oxidative decarboxylation (PubMed:19415934, PubMed:29158519). The methyl group at C-4 beta position is oxidized by helB1 and subsequently removed by the short chain dehydrogenase helC (PubMed:19415934, PubMed:29158519).</text>
</comment>
<comment type="pathway">
    <text evidence="8 10">Mycotoxin biosynthesis.</text>
</comment>
<comment type="induction">
    <text evidence="6 9">Expression is under the control of the secondary metabolism regulator laeA (PubMed:17432932). Expression up-regulated upon exposure to exogenous gliotoxin (PubMed:25311525).</text>
</comment>
<comment type="similarity">
    <text evidence="13">Belongs to the short-chain dehydrogenases/reductases (SDR) family.</text>
</comment>
<dbReference type="EC" id="1.1.1.-" evidence="8 10"/>
<dbReference type="EMBL" id="AAHF01000005">
    <property type="protein sequence ID" value="EAL89315.1"/>
    <property type="molecule type" value="Genomic_DNA"/>
</dbReference>
<dbReference type="RefSeq" id="XP_751353.1">
    <property type="nucleotide sequence ID" value="XM_746260.1"/>
</dbReference>
<dbReference type="SMR" id="Q4WR19"/>
<dbReference type="STRING" id="330879.Q4WR19"/>
<dbReference type="GlyCosmos" id="Q4WR19">
    <property type="glycosylation" value="2 sites, No reported glycans"/>
</dbReference>
<dbReference type="EnsemblFungi" id="EAL89315">
    <property type="protein sequence ID" value="EAL89315"/>
    <property type="gene ID" value="AFUA_4G14800"/>
</dbReference>
<dbReference type="GeneID" id="3508871"/>
<dbReference type="KEGG" id="afm:AFUA_4G14800"/>
<dbReference type="VEuPathDB" id="FungiDB:Afu4g14800"/>
<dbReference type="eggNOG" id="KOG4169">
    <property type="taxonomic scope" value="Eukaryota"/>
</dbReference>
<dbReference type="HOGENOM" id="CLU_010194_2_10_1"/>
<dbReference type="InParanoid" id="Q4WR19"/>
<dbReference type="OMA" id="IYATQQA"/>
<dbReference type="OrthoDB" id="498125at2759"/>
<dbReference type="Proteomes" id="UP000002530">
    <property type="component" value="Chromosome 4"/>
</dbReference>
<dbReference type="GO" id="GO:0005737">
    <property type="term" value="C:cytoplasm"/>
    <property type="evidence" value="ECO:0000318"/>
    <property type="project" value="GO_Central"/>
</dbReference>
<dbReference type="GO" id="GO:0016616">
    <property type="term" value="F:oxidoreductase activity, acting on the CH-OH group of donors, NAD or NADP as acceptor"/>
    <property type="evidence" value="ECO:0000318"/>
    <property type="project" value="GO_Central"/>
</dbReference>
<dbReference type="GO" id="GO:1900812">
    <property type="term" value="P:helvolic acid biosynthetic process"/>
    <property type="evidence" value="ECO:0000314"/>
    <property type="project" value="GO_Central"/>
</dbReference>
<dbReference type="GO" id="GO:0019748">
    <property type="term" value="P:secondary metabolic process"/>
    <property type="evidence" value="ECO:0000317"/>
    <property type="project" value="AspGD"/>
</dbReference>
<dbReference type="CDD" id="cd05233">
    <property type="entry name" value="SDR_c"/>
    <property type="match status" value="1"/>
</dbReference>
<dbReference type="FunFam" id="3.40.50.720:FF:000934">
    <property type="entry name" value="Short chain dehydrogenase"/>
    <property type="match status" value="1"/>
</dbReference>
<dbReference type="Gene3D" id="3.40.50.720">
    <property type="entry name" value="NAD(P)-binding Rossmann-like Domain"/>
    <property type="match status" value="1"/>
</dbReference>
<dbReference type="InterPro" id="IPR036291">
    <property type="entry name" value="NAD(P)-bd_dom_sf"/>
</dbReference>
<dbReference type="InterPro" id="IPR020904">
    <property type="entry name" value="Sc_DH/Rdtase_CS"/>
</dbReference>
<dbReference type="InterPro" id="IPR002347">
    <property type="entry name" value="SDR_fam"/>
</dbReference>
<dbReference type="PANTHER" id="PTHR44229">
    <property type="entry name" value="15-HYDROXYPROSTAGLANDIN DEHYDROGENASE [NAD(+)]"/>
    <property type="match status" value="1"/>
</dbReference>
<dbReference type="PANTHER" id="PTHR44229:SF4">
    <property type="entry name" value="15-HYDROXYPROSTAGLANDIN DEHYDROGENASE [NAD(+)]"/>
    <property type="match status" value="1"/>
</dbReference>
<dbReference type="Pfam" id="PF00106">
    <property type="entry name" value="adh_short"/>
    <property type="match status" value="1"/>
</dbReference>
<dbReference type="PRINTS" id="PR00081">
    <property type="entry name" value="GDHRDH"/>
</dbReference>
<dbReference type="PRINTS" id="PR00080">
    <property type="entry name" value="SDRFAMILY"/>
</dbReference>
<dbReference type="SUPFAM" id="SSF51735">
    <property type="entry name" value="NAD(P)-binding Rossmann-fold domains"/>
    <property type="match status" value="1"/>
</dbReference>
<dbReference type="PROSITE" id="PS00061">
    <property type="entry name" value="ADH_SHORT"/>
    <property type="match status" value="1"/>
</dbReference>
<sequence>MNTAIITGAAQGVGLCIAEALAQRNYRIVLSDIDTEKGPAAASKLNLTHGEGTAAFFHCDLSNLREIDALLSFTIETMGGFSVLINNAGYLRAPFLALSAQDIQDMITVNLTAPIYATQQAIKYWDGLHQGQAGCVVSVTSSSSFKTYASIAPYGAAKAGAAMFTFAAGAFHPRVRVNAVAPTAIATGFDKNRMRVETDRTGPGYTPEEEMRAMGLKRLQPQEVAEAVVRCVEDKGLYGKVLYLDAVEGIKIHDGYT</sequence>
<organism>
    <name type="scientific">Aspergillus fumigatus (strain ATCC MYA-4609 / CBS 101355 / FGSC A1100 / Af293)</name>
    <name type="common">Neosartorya fumigata</name>
    <dbReference type="NCBI Taxonomy" id="330879"/>
    <lineage>
        <taxon>Eukaryota</taxon>
        <taxon>Fungi</taxon>
        <taxon>Dikarya</taxon>
        <taxon>Ascomycota</taxon>
        <taxon>Pezizomycotina</taxon>
        <taxon>Eurotiomycetes</taxon>
        <taxon>Eurotiomycetidae</taxon>
        <taxon>Eurotiales</taxon>
        <taxon>Aspergillaceae</taxon>
        <taxon>Aspergillus</taxon>
        <taxon>Aspergillus subgen. Fumigati</taxon>
    </lineage>
</organism>
<protein>
    <recommendedName>
        <fullName evidence="12">Short chain dehydrogenase helC</fullName>
        <ecNumber evidence="8 10">1.1.1.-</ecNumber>
    </recommendedName>
    <alternativeName>
        <fullName evidence="12">Helvolic acid biosynthesis cluster protein helC</fullName>
    </alternativeName>
</protein>
<evidence type="ECO:0000250" key="1">
    <source>
        <dbReference type="UniProtKB" id="L0E2Z4"/>
    </source>
</evidence>
<evidence type="ECO:0000250" key="2">
    <source>
        <dbReference type="UniProtKB" id="O93868"/>
    </source>
</evidence>
<evidence type="ECO:0000255" key="3"/>
<evidence type="ECO:0000255" key="4">
    <source>
        <dbReference type="PROSITE-ProRule" id="PRU00498"/>
    </source>
</evidence>
<evidence type="ECO:0000255" key="5">
    <source>
        <dbReference type="PROSITE-ProRule" id="PRU10001"/>
    </source>
</evidence>
<evidence type="ECO:0000269" key="6">
    <source>
    </source>
</evidence>
<evidence type="ECO:0000269" key="7">
    <source>
    </source>
</evidence>
<evidence type="ECO:0000269" key="8">
    <source>
    </source>
</evidence>
<evidence type="ECO:0000269" key="9">
    <source>
    </source>
</evidence>
<evidence type="ECO:0000269" key="10">
    <source>
    </source>
</evidence>
<evidence type="ECO:0000303" key="11">
    <source>
    </source>
</evidence>
<evidence type="ECO:0000303" key="12">
    <source>
    </source>
</evidence>
<evidence type="ECO:0000305" key="13"/>
<accession>Q4WR19</accession>
<gene>
    <name evidence="12" type="primary">helC</name>
    <name evidence="11" type="synonym">sdr1</name>
    <name type="ORF">AFUA_4G14800</name>
</gene>
<proteinExistence type="evidence at protein level"/>